<sequence>MTDPLNPTRLQNHPALARIIESGRTNLPTGITTSGALSAYAQNAAAIIRDNREREKVEIADLNNRLARYVEKVRFLEAQNRVLENDIGVFRNAAHTHSERIAVYFESEKASLFTLVRENKAKISTAEQNIRKLEPDVISAKKNLESSFQLRVQTREDKRSQMKILSNLEAENSYIKRLTTDCEEEKSRVHSEISRLRSDIKRVHALRDKERSKHSSSSQELLKRLNGCISQHDIAIREEISKARRDTTNKNRDYFHNELHAAMKEIRDRFEKDSRAARKTWEDWYHKKITEIKKGSESYSSIQNQAREEILRIRSIVNEFRGKLSDSETINQQLIKRIDDLHFQDKENLRLFEIALNEKENLVIKMREECTKLSVELDKLVENQINLRNEINHYRKLMENAEHLRTTVQTHVTYNAPPPPLPQSGPRTTSYHAYGSAYNDSLL</sequence>
<reference key="1">
    <citation type="journal article" date="1998" name="Science">
        <title>Genome sequence of the nematode C. elegans: a platform for investigating biology.</title>
        <authorList>
            <consortium name="The C. elegans sequencing consortium"/>
        </authorList>
    </citation>
    <scope>NUCLEOTIDE SEQUENCE [LARGE SCALE GENOMIC DNA]</scope>
    <source>
        <strain>Bristol N2</strain>
    </source>
</reference>
<reference key="2">
    <citation type="journal article" date="2001" name="Proc. Natl. Acad. Sci. U.S.A.">
        <title>Essential roles for four cytoplasmic intermediate filament proteins in Caenorhabditis elegans development.</title>
        <authorList>
            <person name="Karabinos A."/>
            <person name="Schmidt H."/>
            <person name="Harborth J."/>
            <person name="Schnabel R."/>
            <person name="Weber K."/>
        </authorList>
    </citation>
    <scope>FUNCTION</scope>
</reference>
<organism>
    <name type="scientific">Caenorhabditis elegans</name>
    <dbReference type="NCBI Taxonomy" id="6239"/>
    <lineage>
        <taxon>Eukaryota</taxon>
        <taxon>Metazoa</taxon>
        <taxon>Ecdysozoa</taxon>
        <taxon>Nematoda</taxon>
        <taxon>Chromadorea</taxon>
        <taxon>Rhabditida</taxon>
        <taxon>Rhabditina</taxon>
        <taxon>Rhabditomorpha</taxon>
        <taxon>Rhabditoidea</taxon>
        <taxon>Rhabditidae</taxon>
        <taxon>Peloderinae</taxon>
        <taxon>Caenorhabditis</taxon>
    </lineage>
</organism>
<gene>
    <name type="primary">ifd-2</name>
    <name type="ORF">F25E2.4</name>
</gene>
<dbReference type="EMBL" id="FO081218">
    <property type="protein sequence ID" value="CCD69985.1"/>
    <property type="molecule type" value="Genomic_DNA"/>
</dbReference>
<dbReference type="PIR" id="T29820">
    <property type="entry name" value="T29820"/>
</dbReference>
<dbReference type="RefSeq" id="NP_508160.1">
    <property type="nucleotide sequence ID" value="NM_075759.7"/>
</dbReference>
<dbReference type="SMR" id="Q19782"/>
<dbReference type="BioGRID" id="45383">
    <property type="interactions" value="6"/>
</dbReference>
<dbReference type="DIP" id="DIP-24353N"/>
<dbReference type="FunCoup" id="Q19782">
    <property type="interactions" value="11"/>
</dbReference>
<dbReference type="IntAct" id="Q19782">
    <property type="interactions" value="3"/>
</dbReference>
<dbReference type="STRING" id="6239.F25E2.4.1"/>
<dbReference type="PaxDb" id="6239-F25E2.4"/>
<dbReference type="PeptideAtlas" id="Q19782"/>
<dbReference type="EnsemblMetazoa" id="F25E2.4.1">
    <property type="protein sequence ID" value="F25E2.4.1"/>
    <property type="gene ID" value="WBGene00002058"/>
</dbReference>
<dbReference type="GeneID" id="180430"/>
<dbReference type="KEGG" id="cel:CELE_F25E2.4"/>
<dbReference type="UCSC" id="F25E2.4">
    <property type="organism name" value="c. elegans"/>
</dbReference>
<dbReference type="AGR" id="WB:WBGene00002058"/>
<dbReference type="CTD" id="180430"/>
<dbReference type="WormBase" id="F25E2.4">
    <property type="protein sequence ID" value="CE07133"/>
    <property type="gene ID" value="WBGene00002058"/>
    <property type="gene designation" value="ifd-2"/>
</dbReference>
<dbReference type="eggNOG" id="KOG0977">
    <property type="taxonomic scope" value="Eukaryota"/>
</dbReference>
<dbReference type="GeneTree" id="ENSGT00970000196250"/>
<dbReference type="HOGENOM" id="CLU_032944_0_0_1"/>
<dbReference type="InParanoid" id="Q19782"/>
<dbReference type="OMA" id="KMREECT"/>
<dbReference type="OrthoDB" id="2441647at2759"/>
<dbReference type="PhylomeDB" id="Q19782"/>
<dbReference type="Reactome" id="R-CEL-2559584">
    <property type="pathway name" value="Formation of Senescence-Associated Heterochromatin Foci (SAHF)"/>
</dbReference>
<dbReference type="Reactome" id="R-CEL-4419969">
    <property type="pathway name" value="Depolymerization of the Nuclear Lamina"/>
</dbReference>
<dbReference type="Reactome" id="R-CEL-9013405">
    <property type="pathway name" value="RHOD GTPase cycle"/>
</dbReference>
<dbReference type="Reactome" id="R-CEL-9035034">
    <property type="pathway name" value="RHOF GTPase cycle"/>
</dbReference>
<dbReference type="PRO" id="PR:Q19782"/>
<dbReference type="Proteomes" id="UP000001940">
    <property type="component" value="Chromosome X"/>
</dbReference>
<dbReference type="Bgee" id="WBGene00002058">
    <property type="expression patterns" value="Expressed in material anatomical entity and 4 other cell types or tissues"/>
</dbReference>
<dbReference type="GO" id="GO:0005737">
    <property type="term" value="C:cytoplasm"/>
    <property type="evidence" value="ECO:0007669"/>
    <property type="project" value="UniProtKB-SubCell"/>
</dbReference>
<dbReference type="GO" id="GO:0005882">
    <property type="term" value="C:intermediate filament"/>
    <property type="evidence" value="ECO:0007669"/>
    <property type="project" value="UniProtKB-KW"/>
</dbReference>
<dbReference type="GO" id="GO:0005635">
    <property type="term" value="C:nuclear envelope"/>
    <property type="evidence" value="ECO:0000318"/>
    <property type="project" value="GO_Central"/>
</dbReference>
<dbReference type="GO" id="GO:0005652">
    <property type="term" value="C:nuclear lamina"/>
    <property type="evidence" value="ECO:0000318"/>
    <property type="project" value="GO_Central"/>
</dbReference>
<dbReference type="GO" id="GO:0005200">
    <property type="term" value="F:structural constituent of cytoskeleton"/>
    <property type="evidence" value="ECO:0000318"/>
    <property type="project" value="GO_Central"/>
</dbReference>
<dbReference type="GO" id="GO:0031507">
    <property type="term" value="P:heterochromatin formation"/>
    <property type="evidence" value="ECO:0000318"/>
    <property type="project" value="GO_Central"/>
</dbReference>
<dbReference type="GO" id="GO:0006998">
    <property type="term" value="P:nuclear envelope organization"/>
    <property type="evidence" value="ECO:0000318"/>
    <property type="project" value="GO_Central"/>
</dbReference>
<dbReference type="GO" id="GO:0007097">
    <property type="term" value="P:nuclear migration"/>
    <property type="evidence" value="ECO:0000318"/>
    <property type="project" value="GO_Central"/>
</dbReference>
<dbReference type="GO" id="GO:0051664">
    <property type="term" value="P:nuclear pore localization"/>
    <property type="evidence" value="ECO:0000318"/>
    <property type="project" value="GO_Central"/>
</dbReference>
<dbReference type="GO" id="GO:0090435">
    <property type="term" value="P:protein localization to nuclear envelope"/>
    <property type="evidence" value="ECO:0000318"/>
    <property type="project" value="GO_Central"/>
</dbReference>
<dbReference type="Gene3D" id="1.20.5.170">
    <property type="match status" value="1"/>
</dbReference>
<dbReference type="InterPro" id="IPR039008">
    <property type="entry name" value="IF_rod_dom"/>
</dbReference>
<dbReference type="PANTHER" id="PTHR45721:SF13">
    <property type="entry name" value="INTERMEDIATE FILAMENT PROTEIN IFD-2"/>
    <property type="match status" value="1"/>
</dbReference>
<dbReference type="PANTHER" id="PTHR45721">
    <property type="entry name" value="LAMIN DM0-RELATED"/>
    <property type="match status" value="1"/>
</dbReference>
<dbReference type="Pfam" id="PF00038">
    <property type="entry name" value="Filament"/>
    <property type="match status" value="1"/>
</dbReference>
<dbReference type="SUPFAM" id="SSF64593">
    <property type="entry name" value="Intermediate filament protein, coiled coil region"/>
    <property type="match status" value="2"/>
</dbReference>
<dbReference type="PROSITE" id="PS51842">
    <property type="entry name" value="IF_ROD_2"/>
    <property type="match status" value="1"/>
</dbReference>
<comment type="function">
    <text evidence="2">Cytoplasmic intermediate filaments provide mechanical strength to cells. Not essential protein.</text>
</comment>
<comment type="subcellular location">
    <subcellularLocation>
        <location evidence="3">Cytoplasm</location>
    </subcellularLocation>
</comment>
<comment type="similarity">
    <text evidence="1">Belongs to the intermediate filament family.</text>
</comment>
<evidence type="ECO:0000255" key="1">
    <source>
        <dbReference type="PROSITE-ProRule" id="PRU01188"/>
    </source>
</evidence>
<evidence type="ECO:0000269" key="2">
    <source>
    </source>
</evidence>
<evidence type="ECO:0000305" key="3"/>
<accession>Q19782</accession>
<name>IFD2_CAEEL</name>
<keyword id="KW-0175">Coiled coil</keyword>
<keyword id="KW-0963">Cytoplasm</keyword>
<keyword id="KW-0403">Intermediate filament</keyword>
<keyword id="KW-1185">Reference proteome</keyword>
<feature type="chain" id="PRO_0000063844" description="Intermediate filament protein ifd-2">
    <location>
        <begin position="1"/>
        <end position="443"/>
    </location>
</feature>
<feature type="domain" description="IF rod" evidence="1">
    <location>
        <begin position="55"/>
        <end position="405"/>
    </location>
</feature>
<feature type="region of interest" description="Head">
    <location>
        <begin position="1"/>
        <end position="58"/>
    </location>
</feature>
<feature type="region of interest" description="Coil 1A">
    <location>
        <begin position="59"/>
        <end position="90"/>
    </location>
</feature>
<feature type="region of interest" description="Linker 1">
    <location>
        <begin position="91"/>
        <end position="104"/>
    </location>
</feature>
<feature type="region of interest" description="Coil 1B">
    <location>
        <begin position="105"/>
        <end position="239"/>
    </location>
</feature>
<feature type="region of interest" description="Linker 12">
    <location>
        <begin position="240"/>
        <end position="257"/>
    </location>
</feature>
<feature type="region of interest" description="Coil 2">
    <location>
        <begin position="258"/>
        <end position="403"/>
    </location>
</feature>
<feature type="region of interest" description="Tail">
    <location>
        <begin position="404"/>
        <end position="443"/>
    </location>
</feature>
<protein>
    <recommendedName>
        <fullName>Intermediate filament protein ifd-2</fullName>
    </recommendedName>
    <alternativeName>
        <fullName>Cel IF D2</fullName>
    </alternativeName>
    <alternativeName>
        <fullName>Intermediate filament protein D2</fullName>
        <shortName>IF-D2</shortName>
    </alternativeName>
</protein>
<proteinExistence type="inferred from homology"/>